<evidence type="ECO:0000255" key="1">
    <source>
        <dbReference type="PROSITE-ProRule" id="PRU00158"/>
    </source>
</evidence>
<evidence type="ECO:0000269" key="2">
    <source>
    </source>
</evidence>
<evidence type="ECO:0000269" key="3">
    <source>
    </source>
</evidence>
<evidence type="ECO:0000269" key="4">
    <source>
    </source>
</evidence>
<evidence type="ECO:0000269" key="5">
    <source>
    </source>
</evidence>
<evidence type="ECO:0000269" key="6">
    <source>
    </source>
</evidence>
<evidence type="ECO:0000269" key="7">
    <source>
    </source>
</evidence>
<evidence type="ECO:0000269" key="8">
    <source>
    </source>
</evidence>
<evidence type="ECO:0000269" key="9">
    <source>
    </source>
</evidence>
<evidence type="ECO:0000269" key="10">
    <source>
    </source>
</evidence>
<evidence type="ECO:0000305" key="11"/>
<evidence type="ECO:0000312" key="12">
    <source>
        <dbReference type="EMBL" id="AAB67434.1"/>
    </source>
</evidence>
<evidence type="ECO:0007744" key="13">
    <source>
        <dbReference type="PDB" id="4XHR"/>
    </source>
</evidence>
<evidence type="ECO:0007744" key="14">
    <source>
        <dbReference type="PDB" id="4XIZ"/>
    </source>
</evidence>
<evidence type="ECO:0007744" key="15">
    <source>
        <dbReference type="PDB" id="4YTW"/>
    </source>
</evidence>
<evidence type="ECO:0007744" key="16">
    <source>
        <dbReference type="PDB" id="4YTX"/>
    </source>
</evidence>
<evidence type="ECO:0007829" key="17">
    <source>
        <dbReference type="PDB" id="4YTW"/>
    </source>
</evidence>
<dbReference type="EMBL" id="U14913">
    <property type="protein sequence ID" value="AAB67434.1"/>
    <property type="molecule type" value="Genomic_DNA"/>
</dbReference>
<dbReference type="EMBL" id="BK006945">
    <property type="protein sequence ID" value="DAA09512.1"/>
    <property type="molecule type" value="Genomic_DNA"/>
</dbReference>
<dbReference type="PIR" id="S48546">
    <property type="entry name" value="S48546"/>
</dbReference>
<dbReference type="RefSeq" id="NP_013294.1">
    <property type="nucleotide sequence ID" value="NM_001182080.1"/>
</dbReference>
<dbReference type="PDB" id="4XHR">
    <property type="method" value="X-ray"/>
    <property type="resolution" value="2.55 A"/>
    <property type="chains" value="A/B=1-175"/>
</dbReference>
<dbReference type="PDB" id="4XIZ">
    <property type="method" value="X-ray"/>
    <property type="resolution" value="2.00 A"/>
    <property type="chains" value="A/B=1-170"/>
</dbReference>
<dbReference type="PDB" id="4YTW">
    <property type="method" value="X-ray"/>
    <property type="resolution" value="1.40 A"/>
    <property type="chains" value="B/D=1-170"/>
</dbReference>
<dbReference type="PDB" id="4YTX">
    <property type="method" value="X-ray"/>
    <property type="resolution" value="3.20 A"/>
    <property type="chains" value="B/D/F/H/J/L/N/P=1-170"/>
</dbReference>
<dbReference type="PDB" id="5JQL">
    <property type="method" value="X-ray"/>
    <property type="resolution" value="2.90 A"/>
    <property type="chains" value="A/C/E/G/I/K=1-175"/>
</dbReference>
<dbReference type="PDB" id="5JQM">
    <property type="method" value="X-ray"/>
    <property type="resolution" value="1.50 A"/>
    <property type="chains" value="A/B/C=1-175"/>
</dbReference>
<dbReference type="PDB" id="6KYL">
    <property type="method" value="X-ray"/>
    <property type="resolution" value="3.55 A"/>
    <property type="chains" value="B/D=1-175"/>
</dbReference>
<dbReference type="PDBsum" id="4XHR"/>
<dbReference type="PDBsum" id="4XIZ"/>
<dbReference type="PDBsum" id="4YTW"/>
<dbReference type="PDBsum" id="4YTX"/>
<dbReference type="PDBsum" id="5JQL"/>
<dbReference type="PDBsum" id="5JQM"/>
<dbReference type="PDBsum" id="6KYL"/>
<dbReference type="SMR" id="Q05776"/>
<dbReference type="BioGRID" id="31463">
    <property type="interactions" value="583"/>
</dbReference>
<dbReference type="DIP" id="DIP-4798N"/>
<dbReference type="FunCoup" id="Q05776">
    <property type="interactions" value="431"/>
</dbReference>
<dbReference type="IntAct" id="Q05776">
    <property type="interactions" value="2"/>
</dbReference>
<dbReference type="MINT" id="Q05776"/>
<dbReference type="STRING" id="4932.YLR193C"/>
<dbReference type="PaxDb" id="4932-YLR193C"/>
<dbReference type="PeptideAtlas" id="Q05776"/>
<dbReference type="DNASU" id="850890"/>
<dbReference type="EnsemblFungi" id="YLR193C_mRNA">
    <property type="protein sequence ID" value="YLR193C"/>
    <property type="gene ID" value="YLR193C"/>
</dbReference>
<dbReference type="GeneID" id="850890"/>
<dbReference type="KEGG" id="sce:YLR193C"/>
<dbReference type="AGR" id="SGD:S000004183"/>
<dbReference type="SGD" id="S000004183">
    <property type="gene designation" value="UPS1"/>
</dbReference>
<dbReference type="VEuPathDB" id="FungiDB:YLR193C"/>
<dbReference type="eggNOG" id="KOG3337">
    <property type="taxonomic scope" value="Eukaryota"/>
</dbReference>
<dbReference type="GeneTree" id="ENSGT00950000182810"/>
<dbReference type="HOGENOM" id="CLU_067902_3_1_1"/>
<dbReference type="InParanoid" id="Q05776"/>
<dbReference type="OMA" id="GYEFFKC"/>
<dbReference type="OrthoDB" id="341300at2759"/>
<dbReference type="BioCyc" id="YEAST:G3O-32315-MONOMER"/>
<dbReference type="Reactome" id="R-SCE-6803204">
    <property type="pathway name" value="TP53 Regulates Transcription of Genes Involved in Cytochrome C Release"/>
</dbReference>
<dbReference type="BioGRID-ORCS" id="850890">
    <property type="hits" value="0 hits in 10 CRISPR screens"/>
</dbReference>
<dbReference type="EvolutionaryTrace" id="Q05776"/>
<dbReference type="PRO" id="PR:Q05776"/>
<dbReference type="Proteomes" id="UP000002311">
    <property type="component" value="Chromosome XII"/>
</dbReference>
<dbReference type="RNAct" id="Q05776">
    <property type="molecule type" value="protein"/>
</dbReference>
<dbReference type="GO" id="GO:0005743">
    <property type="term" value="C:mitochondrial inner membrane"/>
    <property type="evidence" value="ECO:0000314"/>
    <property type="project" value="SGD"/>
</dbReference>
<dbReference type="GO" id="GO:0005758">
    <property type="term" value="C:mitochondrial intermembrane space"/>
    <property type="evidence" value="ECO:0000314"/>
    <property type="project" value="SGD"/>
</dbReference>
<dbReference type="GO" id="GO:0005739">
    <property type="term" value="C:mitochondrion"/>
    <property type="evidence" value="ECO:0007005"/>
    <property type="project" value="SGD"/>
</dbReference>
<dbReference type="GO" id="GO:0008289">
    <property type="term" value="F:lipid binding"/>
    <property type="evidence" value="ECO:0000269"/>
    <property type="project" value="DisProt"/>
</dbReference>
<dbReference type="GO" id="GO:1990050">
    <property type="term" value="F:phosphatidic acid transfer activity"/>
    <property type="evidence" value="ECO:0000314"/>
    <property type="project" value="SGD"/>
</dbReference>
<dbReference type="GO" id="GO:0032048">
    <property type="term" value="P:cardiolipin metabolic process"/>
    <property type="evidence" value="ECO:0000315"/>
    <property type="project" value="SGD"/>
</dbReference>
<dbReference type="GO" id="GO:0045332">
    <property type="term" value="P:phospholipid translocation"/>
    <property type="evidence" value="ECO:0000314"/>
    <property type="project" value="SGD"/>
</dbReference>
<dbReference type="GO" id="GO:0015914">
    <property type="term" value="P:phospholipid transport"/>
    <property type="evidence" value="ECO:0000314"/>
    <property type="project" value="SGD"/>
</dbReference>
<dbReference type="GO" id="GO:2001247">
    <property type="term" value="P:positive regulation of phosphatidylcholine biosynthetic process"/>
    <property type="evidence" value="ECO:0000315"/>
    <property type="project" value="SGD"/>
</dbReference>
<dbReference type="DisProt" id="DP02326"/>
<dbReference type="InterPro" id="IPR006797">
    <property type="entry name" value="PRELI/MSF1_dom"/>
</dbReference>
<dbReference type="InterPro" id="IPR037365">
    <property type="entry name" value="Slowmo/Ups"/>
</dbReference>
<dbReference type="PANTHER" id="PTHR11158">
    <property type="entry name" value="MSF1/PX19 RELATED"/>
    <property type="match status" value="1"/>
</dbReference>
<dbReference type="Pfam" id="PF04707">
    <property type="entry name" value="PRELI"/>
    <property type="match status" value="1"/>
</dbReference>
<dbReference type="PROSITE" id="PS50904">
    <property type="entry name" value="PRELI_MSF1"/>
    <property type="match status" value="1"/>
</dbReference>
<comment type="function">
    <text evidence="3 4 5 6 9 10">Required for maintenance of normal mitochondrial morphology (PubMed:16754953, PubMed:26071601). Required for PCP1-dependent processing of MGM1 (PubMed:16754953). The UPS1:MDM35 complex mediates the transfer of phosphatidic acid (PA) between liposomes and probably functions as a PA transporter across the mitochondrion intermembrane space (PubMed:26071601, PubMed:26071602, PubMed:26235513). Phosphatidic acid release requires dissociation of the UPS1:MDM35 complex (PubMed:26235513). Phosphatidic acid import is required for cardiolipin (CL) synthesis in the mitochondrial inner membrane (PubMed:26071602). With UPS2, controls the level of cardiolipin in mitochondria (PubMed:19506038). Cardiolipin is a unique phospholipid with four fatty acid chains and is present mainly in the mitochondrial inner membrane where it stabilizes the electron transport chain supercomplex between complexes III and IV through direct interaction of their subunits.</text>
</comment>
<comment type="subunit">
    <text evidence="3 6 7 8 9 10">Interacts with MDM35 (PubMed:20622808, PubMed:20657548, PubMed:26071601, PubMed:26071602, PubMed:26235513). Found associated with a 170 kDa complex.</text>
</comment>
<comment type="interaction">
    <interactant intactId="EBI-30337">
        <id>Q05776</id>
    </interactant>
    <interactant intactId="EBI-2080774">
        <id>O60200</id>
        <label>MDM35</label>
    </interactant>
    <organismsDiffer>false</organismsDiffer>
    <experiments>5</experiments>
</comment>
<comment type="subcellular location">
    <subcellularLocation>
        <location evidence="10">Mitochondrion inner membrane</location>
        <topology evidence="10">Peripheral membrane protein</topology>
        <orientation evidence="11">Intermembrane side</orientation>
    </subcellularLocation>
    <subcellularLocation>
        <location evidence="10">Mitochondrion intermembrane space</location>
    </subcellularLocation>
    <text evidence="11">Lacks the two major intermembrane space-targeting signals, bipartite presequences and cysteine motifs, and import is mediated by another IMS protein, MDM35.</text>
</comment>
<comment type="disruption phenotype">
    <text evidence="3">Cells show slow growth, fragmented mitochondria and have a 50-fold reduced level of s-MGM1. These defects can be complemented by human PRELI or bypassed by growth on a nonfermentable carbon source.</text>
</comment>
<comment type="miscellaneous">
    <text evidence="2">Present with 704 molecules/cell in log phase SD medium.</text>
</comment>
<comment type="similarity">
    <text evidence="11">Belongs to the slowmo family.</text>
</comment>
<name>UPS1_YEAST</name>
<feature type="chain" id="PRO_0000271269" description="Protein UPS1, mitochondrial">
    <location>
        <begin position="1"/>
        <end position="175"/>
    </location>
</feature>
<feature type="domain" description="PRELI/MSF1" evidence="1">
    <location>
        <begin position="2"/>
        <end position="172"/>
    </location>
</feature>
<feature type="region of interest" description="Required for mitochondrial targeting" evidence="3">
    <location>
        <begin position="1"/>
        <end position="80"/>
    </location>
</feature>
<feature type="binding site" evidence="10">
    <location>
        <position position="26"/>
    </location>
    <ligand>
        <name>a 1,2-diacyl-sn-glycero-3-phosphate</name>
        <dbReference type="ChEBI" id="CHEBI:58608"/>
    </ligand>
</feature>
<feature type="binding site" evidence="10">
    <location>
        <position position="58"/>
    </location>
    <ligand>
        <name>a 1,2-diacyl-sn-glycero-3-phosphate</name>
        <dbReference type="ChEBI" id="CHEBI:58608"/>
    </ligand>
</feature>
<feature type="binding site" evidence="8">
    <location>
        <position position="148"/>
    </location>
    <ligand>
        <name>a 1,2-diacyl-sn-glycero-3-phosphate</name>
        <dbReference type="ChEBI" id="CHEBI:58608"/>
    </ligand>
</feature>
<feature type="binding site" evidence="8 10">
    <location>
        <position position="152"/>
    </location>
    <ligand>
        <name>a 1,2-diacyl-sn-glycero-3-phosphate</name>
        <dbReference type="ChEBI" id="CHEBI:58608"/>
    </ligand>
</feature>
<feature type="mutagenesis site" description="Strongly impairs interaction with MDM35. Failure to complement the mitochondrial defects of UPS1-deficient cells." evidence="8">
    <original>F</original>
    <variation>D</variation>
    <location>
        <position position="23"/>
    </location>
</feature>
<feature type="mutagenesis site" description="Nearly abolishes phosphatidic acid transfer activity." evidence="10">
    <original>R</original>
    <variation>E</variation>
    <location>
        <position position="25"/>
    </location>
</feature>
<feature type="mutagenesis site" description="No effect on phosphatidic acid transfer activity." evidence="10">
    <original>R</original>
    <variation>K</variation>
    <location>
        <position position="25"/>
    </location>
</feature>
<feature type="mutagenesis site" description="Failure to complement the mitochondrial defects of UPS1-deficient cells; when associated with E-58; E-61; E-148 and E-155." evidence="8">
    <original>H</original>
    <variation>E</variation>
    <location>
        <position position="33"/>
    </location>
</feature>
<feature type="mutagenesis site" description="Impairs interaction with MDM35. Reduces ability to complement the mitochondrial defects of UPS1-deficient cells." evidence="8">
    <original>R</original>
    <variation>D</variation>
    <location>
        <position position="42"/>
    </location>
</feature>
<feature type="mutagenesis site" description="Strongly impairs interaction with MDM35. Failure to complement the mitochondrial defects of UPS1-deficient cells." evidence="8">
    <original>L</original>
    <variation>D</variation>
    <location>
        <position position="50"/>
    </location>
</feature>
<feature type="mutagenesis site" description="Decreases phosphatidic acid transfer activity and impairs cardiolipin biosynthesis." evidence="9">
    <original>R</original>
    <variation>E</variation>
    <location>
        <position position="54"/>
    </location>
</feature>
<feature type="mutagenesis site" description="Failure to complement the mitochondrial defects of UPS1-deficient cells; when associated with E-33; E-61; E-148 and E-155." evidence="8">
    <original>K</original>
    <variation>E</variation>
    <location>
        <position position="58"/>
    </location>
</feature>
<feature type="mutagenesis site" description="Failure to complement the mitochondrial defects of UPS1-deficient cells; when associated with E-33; E-58; E-148 and E-155." evidence="8">
    <original>K</original>
    <variation>E</variation>
    <location>
        <position position="61"/>
    </location>
</feature>
<feature type="mutagenesis site" description="Nearly abolishes phosphatidic acid transfer activity; when associated with E-155." evidence="10">
    <original>K</original>
    <variation>E</variation>
    <location>
        <position position="61"/>
    </location>
</feature>
<feature type="mutagenesis site" description="Decreases phosphatidic acid binding and impairs cardiolipin biosynthesis; when associated with A-65." evidence="9">
    <original>L</original>
    <variation>A</variation>
    <location>
        <position position="62"/>
    </location>
</feature>
<feature type="mutagenesis site" description="Decreases phosphatidic acid binding and impairs cardiolipin biosynthesis; when associated with A-62." evidence="9">
    <original>W</original>
    <variation>A</variation>
    <location>
        <position position="65"/>
    </location>
</feature>
<feature type="mutagenesis site" description="Impairs interaction with MDM35. Reduces ability to complement the mitochondrial defects of UPS1-deficient cells." evidence="8">
    <original>W</original>
    <variation>D</variation>
    <location>
        <position position="77"/>
    </location>
</feature>
<feature type="mutagenesis site" description="Failure to complement the mitochondrial defects of UPS1-deficient cells." evidence="8">
    <original>I</original>
    <variation>D</variation>
    <location>
        <position position="78"/>
    </location>
</feature>
<feature type="mutagenesis site" description="Strongly impairs interaction with MDM35. Failure to complement the mitochondrial defects of UPS1-deficient cells." evidence="8">
    <original>V</original>
    <variation>E</variation>
    <location>
        <position position="84"/>
    </location>
</feature>
<feature type="mutagenesis site" description="Strongly impairs interaction with MDM35. Failure to complement the mitochondrial defects of UPS1-deficient cells." evidence="8">
    <original>R</original>
    <variation>D</variation>
    <location>
        <position position="96"/>
    </location>
</feature>
<feature type="mutagenesis site" description="Failure to complement the mitochondrial defects of UPS1-deficient cells." evidence="8">
    <original>N</original>
    <variation>A</variation>
    <location>
        <position position="97"/>
    </location>
</feature>
<feature type="mutagenesis site" description="Failure to complement the mitochondrial defects of UPS1-deficient cells; when associated with E-144." evidence="8">
    <original>M</original>
    <variation>E</variation>
    <location>
        <position position="104"/>
    </location>
</feature>
<feature type="mutagenesis site" description="Failure to complement the mitochondrial defects of UPS1-deficient cells." evidence="8">
    <original>V</original>
    <variation>E</variation>
    <location>
        <position position="106"/>
    </location>
</feature>
<feature type="mutagenesis site" description="Failure to complement the mitochondrial defects of UPS1-deficient cells; when associated with E-104." evidence="8">
    <original>W</original>
    <variation>E</variation>
    <location>
        <position position="144"/>
    </location>
</feature>
<feature type="mutagenesis site" description="Failure to complement the mitochondrial defects of UPS1-deficient cells; when associated with E-33; E-58; E-61 and E-155." evidence="8">
    <original>K</original>
    <variation>E</variation>
    <location>
        <position position="148"/>
    </location>
</feature>
<feature type="mutagenesis site" description="Failure to complement the mitochondrial defects of UPS1-deficient cells; when associated with E-33; E-58; E-61 and E-148." evidence="8">
    <original>K</original>
    <variation>E</variation>
    <location>
        <position position="155"/>
    </location>
</feature>
<feature type="mutagenesis site" description="Nearly abolishes phosphatidic acid transfer activity; when associated with E-61." evidence="10">
    <original>K</original>
    <variation>E</variation>
    <location>
        <position position="155"/>
    </location>
</feature>
<feature type="strand" evidence="17">
    <location>
        <begin position="2"/>
        <end position="13"/>
    </location>
</feature>
<feature type="helix" evidence="17">
    <location>
        <begin position="15"/>
        <end position="23"/>
    </location>
</feature>
<feature type="strand" evidence="17">
    <location>
        <begin position="34"/>
        <end position="44"/>
    </location>
</feature>
<feature type="strand" evidence="17">
    <location>
        <begin position="50"/>
        <end position="59"/>
    </location>
</feature>
<feature type="turn" evidence="17">
    <location>
        <begin position="64"/>
        <end position="69"/>
    </location>
</feature>
<feature type="strand" evidence="17">
    <location>
        <begin position="75"/>
        <end position="85"/>
    </location>
</feature>
<feature type="turn" evidence="17">
    <location>
        <begin position="86"/>
        <end position="89"/>
    </location>
</feature>
<feature type="strand" evidence="17">
    <location>
        <begin position="90"/>
        <end position="100"/>
    </location>
</feature>
<feature type="turn" evidence="17">
    <location>
        <begin position="101"/>
        <end position="103"/>
    </location>
</feature>
<feature type="strand" evidence="17">
    <location>
        <begin position="105"/>
        <end position="115"/>
    </location>
</feature>
<feature type="turn" evidence="17">
    <location>
        <begin position="116"/>
        <end position="119"/>
    </location>
</feature>
<feature type="strand" evidence="17">
    <location>
        <begin position="120"/>
        <end position="130"/>
    </location>
</feature>
<feature type="helix" evidence="17">
    <location>
        <begin position="134"/>
        <end position="136"/>
    </location>
</feature>
<feature type="helix" evidence="17">
    <location>
        <begin position="137"/>
        <end position="167"/>
    </location>
</feature>
<proteinExistence type="evidence at protein level"/>
<organism>
    <name type="scientific">Saccharomyces cerevisiae (strain ATCC 204508 / S288c)</name>
    <name type="common">Baker's yeast</name>
    <dbReference type="NCBI Taxonomy" id="559292"/>
    <lineage>
        <taxon>Eukaryota</taxon>
        <taxon>Fungi</taxon>
        <taxon>Dikarya</taxon>
        <taxon>Ascomycota</taxon>
        <taxon>Saccharomycotina</taxon>
        <taxon>Saccharomycetes</taxon>
        <taxon>Saccharomycetales</taxon>
        <taxon>Saccharomycetaceae</taxon>
        <taxon>Saccharomyces</taxon>
    </lineage>
</organism>
<accession>Q05776</accession>
<accession>D6VYJ6</accession>
<keyword id="KW-0002">3D-structure</keyword>
<keyword id="KW-0445">Lipid transport</keyword>
<keyword id="KW-0446">Lipid-binding</keyword>
<keyword id="KW-0472">Membrane</keyword>
<keyword id="KW-0496">Mitochondrion</keyword>
<keyword id="KW-0999">Mitochondrion inner membrane</keyword>
<keyword id="KW-1185">Reference proteome</keyword>
<keyword id="KW-0813">Transport</keyword>
<gene>
    <name type="primary">UPS1</name>
    <name type="ordered locus">YLR193C</name>
</gene>
<protein>
    <recommendedName>
        <fullName>Protein UPS1, mitochondrial</fullName>
    </recommendedName>
    <alternativeName>
        <fullName>Unprocessed MGM1 protein 1</fullName>
    </alternativeName>
</protein>
<reference evidence="12" key="1">
    <citation type="journal article" date="1997" name="Nature">
        <title>The nucleotide sequence of Saccharomyces cerevisiae chromosome XII.</title>
        <authorList>
            <person name="Johnston M."/>
            <person name="Hillier L.W."/>
            <person name="Riles L."/>
            <person name="Albermann K."/>
            <person name="Andre B."/>
            <person name="Ansorge W."/>
            <person name="Benes V."/>
            <person name="Brueckner M."/>
            <person name="Delius H."/>
            <person name="Dubois E."/>
            <person name="Duesterhoeft A."/>
            <person name="Entian K.-D."/>
            <person name="Floeth M."/>
            <person name="Goffeau A."/>
            <person name="Hebling U."/>
            <person name="Heumann K."/>
            <person name="Heuss-Neitzel D."/>
            <person name="Hilbert H."/>
            <person name="Hilger F."/>
            <person name="Kleine K."/>
            <person name="Koetter P."/>
            <person name="Louis E.J."/>
            <person name="Messenguy F."/>
            <person name="Mewes H.-W."/>
            <person name="Miosga T."/>
            <person name="Moestl D."/>
            <person name="Mueller-Auer S."/>
            <person name="Nentwich U."/>
            <person name="Obermaier B."/>
            <person name="Piravandi E."/>
            <person name="Pohl T.M."/>
            <person name="Portetelle D."/>
            <person name="Purnelle B."/>
            <person name="Rechmann S."/>
            <person name="Rieger M."/>
            <person name="Rinke M."/>
            <person name="Rose M."/>
            <person name="Scharfe M."/>
            <person name="Scherens B."/>
            <person name="Scholler P."/>
            <person name="Schwager C."/>
            <person name="Schwarz S."/>
            <person name="Underwood A.P."/>
            <person name="Urrestarazu L.A."/>
            <person name="Vandenbol M."/>
            <person name="Verhasselt P."/>
            <person name="Vierendeels F."/>
            <person name="Voet M."/>
            <person name="Volckaert G."/>
            <person name="Voss H."/>
            <person name="Wambutt R."/>
            <person name="Wedler E."/>
            <person name="Wedler H."/>
            <person name="Zimmermann F.K."/>
            <person name="Zollner A."/>
            <person name="Hani J."/>
            <person name="Hoheisel J.D."/>
        </authorList>
    </citation>
    <scope>NUCLEOTIDE SEQUENCE [LARGE SCALE GENOMIC DNA]</scope>
    <source>
        <strain>ATCC 204508 / S288c</strain>
    </source>
</reference>
<reference key="2">
    <citation type="journal article" date="2014" name="G3 (Bethesda)">
        <title>The reference genome sequence of Saccharomyces cerevisiae: Then and now.</title>
        <authorList>
            <person name="Engel S.R."/>
            <person name="Dietrich F.S."/>
            <person name="Fisk D.G."/>
            <person name="Binkley G."/>
            <person name="Balakrishnan R."/>
            <person name="Costanzo M.C."/>
            <person name="Dwight S.S."/>
            <person name="Hitz B.C."/>
            <person name="Karra K."/>
            <person name="Nash R.S."/>
            <person name="Weng S."/>
            <person name="Wong E.D."/>
            <person name="Lloyd P."/>
            <person name="Skrzypek M.S."/>
            <person name="Miyasato S.R."/>
            <person name="Simison M."/>
            <person name="Cherry J.M."/>
        </authorList>
    </citation>
    <scope>GENOME REANNOTATION</scope>
    <source>
        <strain>ATCC 204508 / S288c</strain>
    </source>
</reference>
<reference evidence="11" key="3">
    <citation type="journal article" date="2003" name="Nature">
        <title>Global analysis of protein localization in budding yeast.</title>
        <authorList>
            <person name="Huh W.-K."/>
            <person name="Falvo J.V."/>
            <person name="Gerke L.C."/>
            <person name="Carroll A.S."/>
            <person name="Howson R.W."/>
            <person name="Weissman J.S."/>
            <person name="O'Shea E.K."/>
        </authorList>
    </citation>
    <scope>SUBCELLULAR LOCATION [LARGE SCALE ANALYSIS]</scope>
</reference>
<reference evidence="11" key="4">
    <citation type="journal article" date="2003" name="Nature">
        <title>Global analysis of protein expression in yeast.</title>
        <authorList>
            <person name="Ghaemmaghami S."/>
            <person name="Huh W.-K."/>
            <person name="Bower K."/>
            <person name="Howson R.W."/>
            <person name="Belle A."/>
            <person name="Dephoure N."/>
            <person name="O'Shea E.K."/>
            <person name="Weissman J.S."/>
        </authorList>
    </citation>
    <scope>LEVEL OF PROTEIN EXPRESSION [LARGE SCALE ANALYSIS]</scope>
</reference>
<reference evidence="11" key="5">
    <citation type="journal article" date="2006" name="J. Cell Biol.">
        <title>Ups1p, a conserved intermembrane space protein, regulates mitochondrial shape and alternative topogenesis of Mgm1p.</title>
        <authorList>
            <person name="Sesaki H."/>
            <person name="Dunn C.D."/>
            <person name="Iijima M."/>
            <person name="Shepard K.A."/>
            <person name="Yaffe M.P."/>
            <person name="Machamer C.E."/>
            <person name="Jensen R.E."/>
        </authorList>
    </citation>
    <scope>FUNCTION</scope>
    <scope>SUBUNIT</scope>
    <scope>SUBCELLULAR LOCATION</scope>
    <scope>DISRUPTION PHENOTYPE</scope>
</reference>
<reference key="6">
    <citation type="journal article" date="2009" name="J. Cell Biol.">
        <title>The genetic interactome of prohibitins: coordinated control of cardiolipin and phosphatidylethanolamine by conserved regulators in mitochondria.</title>
        <authorList>
            <person name="Osman C."/>
            <person name="Haag M."/>
            <person name="Potting C."/>
            <person name="Rodenfels J."/>
            <person name="Dip P.V."/>
            <person name="Wieland F.T."/>
            <person name="Brugger B."/>
            <person name="Westermann B."/>
            <person name="Langer T."/>
        </authorList>
    </citation>
    <scope>FUNCTION</scope>
    <scope>SUBCELLULAR LOCATION</scope>
</reference>
<reference key="7">
    <citation type="journal article" date="2009" name="J. Cell Biol.">
        <title>Ups1p and Ups2p antagonistically regulate cardiolipin metabolism in mitochondria.</title>
        <authorList>
            <person name="Tamura Y."/>
            <person name="Endo T."/>
            <person name="Iijima M."/>
            <person name="Sesaki H."/>
        </authorList>
    </citation>
    <scope>FUNCTION</scope>
    <scope>SUBCELLULAR LOCATION</scope>
</reference>
<reference key="8">
    <citation type="journal article" date="2010" name="EMBO J.">
        <title>Mdm35p imports Ups proteins into the mitochondrial intermembrane space by functional complex formation.</title>
        <authorList>
            <person name="Tamura Y."/>
            <person name="Iijima M."/>
            <person name="Sesaki H."/>
        </authorList>
    </citation>
    <scope>SUBCELLULAR LOCATION</scope>
    <scope>FUNCTION</scope>
    <scope>INTERACTION MDM35</scope>
</reference>
<reference key="9">
    <citation type="journal article" date="2010" name="EMBO J.">
        <title>Regulation of mitochondrial phospholipids by Ups1/PRELI-like proteins depends on proteolysis and Mdm35.</title>
        <authorList>
            <person name="Potting C."/>
            <person name="Wilmes C."/>
            <person name="Engmann T."/>
            <person name="Osman C."/>
            <person name="Langer T."/>
        </authorList>
    </citation>
    <scope>SUBCELLULAR LOCATION</scope>
    <scope>INTERACTION WITH MDM35</scope>
</reference>
<reference key="10">
    <citation type="journal article" date="2015" name="EMBO Rep.">
        <title>Structural insight into the TRIAP1/PRELI-like domain family of mitochondrial phospholipid transfer complexes.</title>
        <authorList>
            <person name="Miliara X."/>
            <person name="Garnett J.A."/>
            <person name="Tatsuta T."/>
            <person name="Abid Ali F."/>
            <person name="Baldie H."/>
            <person name="Perez-Dorado I."/>
            <person name="Simpson P."/>
            <person name="Yague E."/>
            <person name="Langer T."/>
            <person name="Matthews S."/>
        </authorList>
    </citation>
    <scope>FUNCTION</scope>
    <scope>INTERACTION WITH MDM35</scope>
    <scope>MUTAGENESIS OF ARG-54</scope>
</reference>
<reference evidence="13 14" key="11">
    <citation type="journal article" date="2015" name="EMBO Rep.">
        <title>Structural basis of intramitochondrial phosphatidic acid transport mediated by Ups1-Mdm35 complex.</title>
        <authorList>
            <person name="Yu F."/>
            <person name="He F."/>
            <person name="Yao H."/>
            <person name="Wang C."/>
            <person name="Wang J."/>
            <person name="Li J."/>
            <person name="Qi X."/>
            <person name="Xue H."/>
            <person name="Ding J."/>
            <person name="Zhang P."/>
        </authorList>
    </citation>
    <scope>X-RAY CRYSTALLOGRAPHY (2.00 ANGSTROMS) OF 1-170 IN COMPLEX WITH PHOSPHATIDIC ACID AND MDM35</scope>
    <scope>INTERACTION WITH MDM35</scope>
    <scope>FUNCTION</scope>
    <scope>MUTAGENESIS OF PHE-23; HIS-33; ARG-42; LEU-50; LYS-58; LYS-61; TRP-77; ILE-78; VAL-84; ARG-96; ASN-97; MET-104; VAL-106; TRP-144; LYS-148 AND LYS-155</scope>
</reference>
<reference evidence="15 16" key="12">
    <citation type="journal article" date="2015" name="Nat. Commun.">
        <title>Structural and mechanistic insights into phospholipid transfer by Ups1-Mdm35 in mitochondria.</title>
        <authorList>
            <person name="Watanabe Y."/>
            <person name="Tamura Y."/>
            <person name="Kawano S."/>
            <person name="Endo T."/>
        </authorList>
    </citation>
    <scope>X-RAY CRYSTALLOGRAPHY (1.40 ANGSTROMS) OF 1-170 IN COMPLEX WITH PHOSPHATIDIC ACID AND MDM35</scope>
    <scope>INTERACTION WITH MDM35</scope>
    <scope>FUNCTION</scope>
    <scope>MUTAGENESIS OF ARG-25; LYS-61 AND LYS-155</scope>
    <scope>SUBCELLULAR LOCATION</scope>
</reference>
<sequence>MVLLHKSTHIFPTDFASVSRAFFNRYPNPYSPHVLSIDTISRNVDQEGNLRTTRLLKKSGKLPTWVKPFLRGITETWIIEVSVVNPANSTMKTYTRNLDHTGIMKVEEYTTYQFDSATSSTIADSRVKFSSGFNMGIKSKVEDWSRTKFDENVKKSRMGMAFVIQKLEEARNPQF</sequence>